<evidence type="ECO:0000255" key="1">
    <source>
        <dbReference type="HAMAP-Rule" id="MF_00251"/>
    </source>
</evidence>
<evidence type="ECO:0000305" key="2"/>
<name>RL36_LEPBA</name>
<accession>B0SA24</accession>
<protein>
    <recommendedName>
        <fullName evidence="1">Large ribosomal subunit protein bL36</fullName>
    </recommendedName>
    <alternativeName>
        <fullName evidence="2">50S ribosomal protein L36</fullName>
    </alternativeName>
</protein>
<comment type="similarity">
    <text evidence="1">Belongs to the bacterial ribosomal protein bL36 family.</text>
</comment>
<feature type="chain" id="PRO_1000101038" description="Large ribosomal subunit protein bL36">
    <location>
        <begin position="1"/>
        <end position="37"/>
    </location>
</feature>
<reference key="1">
    <citation type="journal article" date="2008" name="PLoS ONE">
        <title>Genome sequence of the saprophyte Leptospira biflexa provides insights into the evolution of Leptospira and the pathogenesis of leptospirosis.</title>
        <authorList>
            <person name="Picardeau M."/>
            <person name="Bulach D.M."/>
            <person name="Bouchier C."/>
            <person name="Zuerner R.L."/>
            <person name="Zidane N."/>
            <person name="Wilson P.J."/>
            <person name="Creno S."/>
            <person name="Kuczek E.S."/>
            <person name="Bommezzadri S."/>
            <person name="Davis J.C."/>
            <person name="McGrath A."/>
            <person name="Johnson M.J."/>
            <person name="Boursaux-Eude C."/>
            <person name="Seemann T."/>
            <person name="Rouy Z."/>
            <person name="Coppel R.L."/>
            <person name="Rood J.I."/>
            <person name="Lajus A."/>
            <person name="Davies J.K."/>
            <person name="Medigue C."/>
            <person name="Adler B."/>
        </authorList>
    </citation>
    <scope>NUCLEOTIDE SEQUENCE [LARGE SCALE GENOMIC DNA]</scope>
    <source>
        <strain>Patoc 1 / Ames</strain>
    </source>
</reference>
<dbReference type="EMBL" id="CP000777">
    <property type="protein sequence ID" value="ABZ94394.1"/>
    <property type="molecule type" value="Genomic_DNA"/>
</dbReference>
<dbReference type="SMR" id="B0SA24"/>
<dbReference type="KEGG" id="lbf:LBF_1890"/>
<dbReference type="HOGENOM" id="CLU_135723_6_2_12"/>
<dbReference type="GO" id="GO:0005737">
    <property type="term" value="C:cytoplasm"/>
    <property type="evidence" value="ECO:0007669"/>
    <property type="project" value="UniProtKB-ARBA"/>
</dbReference>
<dbReference type="GO" id="GO:1990904">
    <property type="term" value="C:ribonucleoprotein complex"/>
    <property type="evidence" value="ECO:0007669"/>
    <property type="project" value="UniProtKB-KW"/>
</dbReference>
<dbReference type="GO" id="GO:0005840">
    <property type="term" value="C:ribosome"/>
    <property type="evidence" value="ECO:0007669"/>
    <property type="project" value="UniProtKB-KW"/>
</dbReference>
<dbReference type="GO" id="GO:0003735">
    <property type="term" value="F:structural constituent of ribosome"/>
    <property type="evidence" value="ECO:0007669"/>
    <property type="project" value="InterPro"/>
</dbReference>
<dbReference type="GO" id="GO:0006412">
    <property type="term" value="P:translation"/>
    <property type="evidence" value="ECO:0007669"/>
    <property type="project" value="UniProtKB-UniRule"/>
</dbReference>
<dbReference type="HAMAP" id="MF_00251">
    <property type="entry name" value="Ribosomal_bL36"/>
    <property type="match status" value="1"/>
</dbReference>
<dbReference type="InterPro" id="IPR000473">
    <property type="entry name" value="Ribosomal_bL36"/>
</dbReference>
<dbReference type="InterPro" id="IPR035977">
    <property type="entry name" value="Ribosomal_bL36_sp"/>
</dbReference>
<dbReference type="NCBIfam" id="TIGR01022">
    <property type="entry name" value="rpmJ_bact"/>
    <property type="match status" value="1"/>
</dbReference>
<dbReference type="PANTHER" id="PTHR42888">
    <property type="entry name" value="50S RIBOSOMAL PROTEIN L36, CHLOROPLASTIC"/>
    <property type="match status" value="1"/>
</dbReference>
<dbReference type="PANTHER" id="PTHR42888:SF1">
    <property type="entry name" value="LARGE RIBOSOMAL SUBUNIT PROTEIN BL36C"/>
    <property type="match status" value="1"/>
</dbReference>
<dbReference type="Pfam" id="PF00444">
    <property type="entry name" value="Ribosomal_L36"/>
    <property type="match status" value="1"/>
</dbReference>
<dbReference type="SUPFAM" id="SSF57840">
    <property type="entry name" value="Ribosomal protein L36"/>
    <property type="match status" value="1"/>
</dbReference>
<dbReference type="PROSITE" id="PS00828">
    <property type="entry name" value="RIBOSOMAL_L36"/>
    <property type="match status" value="1"/>
</dbReference>
<sequence>MKVRASVKKICPECKVIRRKGVIRVICTNPKHKQRQR</sequence>
<keyword id="KW-0687">Ribonucleoprotein</keyword>
<keyword id="KW-0689">Ribosomal protein</keyword>
<proteinExistence type="inferred from homology"/>
<gene>
    <name evidence="1" type="primary">rpmJ</name>
    <name type="ordered locus">LBF_1890</name>
</gene>
<organism>
    <name type="scientific">Leptospira biflexa serovar Patoc (strain Patoc 1 / Ames)</name>
    <dbReference type="NCBI Taxonomy" id="355278"/>
    <lineage>
        <taxon>Bacteria</taxon>
        <taxon>Pseudomonadati</taxon>
        <taxon>Spirochaetota</taxon>
        <taxon>Spirochaetia</taxon>
        <taxon>Leptospirales</taxon>
        <taxon>Leptospiraceae</taxon>
        <taxon>Leptospira</taxon>
    </lineage>
</organism>